<reference key="1">
    <citation type="journal article" date="2000" name="Nature">
        <title>Sequence and analysis of chromosome 1 of the plant Arabidopsis thaliana.</title>
        <authorList>
            <person name="Theologis A."/>
            <person name="Ecker J.R."/>
            <person name="Palm C.J."/>
            <person name="Federspiel N.A."/>
            <person name="Kaul S."/>
            <person name="White O."/>
            <person name="Alonso J."/>
            <person name="Altafi H."/>
            <person name="Araujo R."/>
            <person name="Bowman C.L."/>
            <person name="Brooks S.Y."/>
            <person name="Buehler E."/>
            <person name="Chan A."/>
            <person name="Chao Q."/>
            <person name="Chen H."/>
            <person name="Cheuk R.F."/>
            <person name="Chin C.W."/>
            <person name="Chung M.K."/>
            <person name="Conn L."/>
            <person name="Conway A.B."/>
            <person name="Conway A.R."/>
            <person name="Creasy T.H."/>
            <person name="Dewar K."/>
            <person name="Dunn P."/>
            <person name="Etgu P."/>
            <person name="Feldblyum T.V."/>
            <person name="Feng J.-D."/>
            <person name="Fong B."/>
            <person name="Fujii C.Y."/>
            <person name="Gill J.E."/>
            <person name="Goldsmith A.D."/>
            <person name="Haas B."/>
            <person name="Hansen N.F."/>
            <person name="Hughes B."/>
            <person name="Huizar L."/>
            <person name="Hunter J.L."/>
            <person name="Jenkins J."/>
            <person name="Johnson-Hopson C."/>
            <person name="Khan S."/>
            <person name="Khaykin E."/>
            <person name="Kim C.J."/>
            <person name="Koo H.L."/>
            <person name="Kremenetskaia I."/>
            <person name="Kurtz D.B."/>
            <person name="Kwan A."/>
            <person name="Lam B."/>
            <person name="Langin-Hooper S."/>
            <person name="Lee A."/>
            <person name="Lee J.M."/>
            <person name="Lenz C.A."/>
            <person name="Li J.H."/>
            <person name="Li Y.-P."/>
            <person name="Lin X."/>
            <person name="Liu S.X."/>
            <person name="Liu Z.A."/>
            <person name="Luros J.S."/>
            <person name="Maiti R."/>
            <person name="Marziali A."/>
            <person name="Militscher J."/>
            <person name="Miranda M."/>
            <person name="Nguyen M."/>
            <person name="Nierman W.C."/>
            <person name="Osborne B.I."/>
            <person name="Pai G."/>
            <person name="Peterson J."/>
            <person name="Pham P.K."/>
            <person name="Rizzo M."/>
            <person name="Rooney T."/>
            <person name="Rowley D."/>
            <person name="Sakano H."/>
            <person name="Salzberg S.L."/>
            <person name="Schwartz J.R."/>
            <person name="Shinn P."/>
            <person name="Southwick A.M."/>
            <person name="Sun H."/>
            <person name="Tallon L.J."/>
            <person name="Tambunga G."/>
            <person name="Toriumi M.J."/>
            <person name="Town C.D."/>
            <person name="Utterback T."/>
            <person name="Van Aken S."/>
            <person name="Vaysberg M."/>
            <person name="Vysotskaia V.S."/>
            <person name="Walker M."/>
            <person name="Wu D."/>
            <person name="Yu G."/>
            <person name="Fraser C.M."/>
            <person name="Venter J.C."/>
            <person name="Davis R.W."/>
        </authorList>
    </citation>
    <scope>NUCLEOTIDE SEQUENCE [LARGE SCALE GENOMIC DNA]</scope>
    <source>
        <strain>cv. Columbia</strain>
    </source>
</reference>
<reference key="2">
    <citation type="journal article" date="2017" name="Plant J.">
        <title>Araport11: a complete reannotation of the Arabidopsis thaliana reference genome.</title>
        <authorList>
            <person name="Cheng C.Y."/>
            <person name="Krishnakumar V."/>
            <person name="Chan A.P."/>
            <person name="Thibaud-Nissen F."/>
            <person name="Schobel S."/>
            <person name="Town C.D."/>
        </authorList>
    </citation>
    <scope>GENOME REANNOTATION</scope>
    <source>
        <strain>cv. Columbia</strain>
    </source>
</reference>
<reference key="3">
    <citation type="submission" date="2009-03" db="EMBL/GenBank/DDBJ databases">
        <title>ORF cloning and analysis of Arabidopsis transcription factor genes.</title>
        <authorList>
            <person name="Fujita M."/>
            <person name="Mizukado S."/>
            <person name="Seki M."/>
            <person name="Shinozaki K."/>
            <person name="Mitsuda N."/>
            <person name="Takiguchi Y."/>
            <person name="Takagi M."/>
        </authorList>
    </citation>
    <scope>NUCLEOTIDE SEQUENCE [LARGE SCALE GENOMIC DNA]</scope>
</reference>
<reference key="4">
    <citation type="journal article" date="2008" name="Trends Plant Sci.">
        <title>The plant B3 superfamily.</title>
        <authorList>
            <person name="Swaminathan K."/>
            <person name="Peterson K."/>
            <person name="Jack T."/>
        </authorList>
    </citation>
    <scope>GENE FAMILY</scope>
</reference>
<proteinExistence type="inferred from homology"/>
<evidence type="ECO:0000255" key="1">
    <source>
        <dbReference type="PROSITE-ProRule" id="PRU00326"/>
    </source>
</evidence>
<evidence type="ECO:0000256" key="2">
    <source>
        <dbReference type="SAM" id="MobiDB-lite"/>
    </source>
</evidence>
<dbReference type="EMBL" id="AC074309">
    <property type="protein sequence ID" value="AAG50787.1"/>
    <property type="molecule type" value="Genomic_DNA"/>
</dbReference>
<dbReference type="EMBL" id="CP002684">
    <property type="protein sequence ID" value="AEE31428.1"/>
    <property type="molecule type" value="Genomic_DNA"/>
</dbReference>
<dbReference type="EMBL" id="AB493490">
    <property type="protein sequence ID" value="BAH30328.1"/>
    <property type="molecule type" value="Genomic_DNA"/>
</dbReference>
<dbReference type="PIR" id="E86444">
    <property type="entry name" value="E86444"/>
</dbReference>
<dbReference type="RefSeq" id="NP_174483.1">
    <property type="nucleotide sequence ID" value="NM_102937.1"/>
</dbReference>
<dbReference type="PaxDb" id="3702-AT1G32030.1"/>
<dbReference type="EnsemblPlants" id="AT1G32030.1">
    <property type="protein sequence ID" value="AT1G32030.1"/>
    <property type="gene ID" value="AT1G32030"/>
</dbReference>
<dbReference type="GeneID" id="840094"/>
<dbReference type="Gramene" id="AT1G32030.1">
    <property type="protein sequence ID" value="AT1G32030.1"/>
    <property type="gene ID" value="AT1G32030"/>
</dbReference>
<dbReference type="KEGG" id="ath:AT1G32030"/>
<dbReference type="Araport" id="AT1G32030"/>
<dbReference type="TAIR" id="AT1G32030"/>
<dbReference type="HOGENOM" id="CLU_072178_0_0_1"/>
<dbReference type="InParanoid" id="Q9C6X0"/>
<dbReference type="OMA" id="MQGSEGP"/>
<dbReference type="PhylomeDB" id="Q9C6X0"/>
<dbReference type="PRO" id="PR:Q9C6X0"/>
<dbReference type="Proteomes" id="UP000006548">
    <property type="component" value="Chromosome 1"/>
</dbReference>
<dbReference type="ExpressionAtlas" id="Q9C6X0">
    <property type="expression patterns" value="baseline and differential"/>
</dbReference>
<dbReference type="GO" id="GO:0005634">
    <property type="term" value="C:nucleus"/>
    <property type="evidence" value="ECO:0007669"/>
    <property type="project" value="UniProtKB-SubCell"/>
</dbReference>
<dbReference type="GO" id="GO:0003677">
    <property type="term" value="F:DNA binding"/>
    <property type="evidence" value="ECO:0007669"/>
    <property type="project" value="UniProtKB-KW"/>
</dbReference>
<dbReference type="CDD" id="cd10017">
    <property type="entry name" value="B3_DNA"/>
    <property type="match status" value="1"/>
</dbReference>
<dbReference type="Gene3D" id="2.40.330.10">
    <property type="entry name" value="DNA-binding pseudobarrel domain"/>
    <property type="match status" value="1"/>
</dbReference>
<dbReference type="InterPro" id="IPR005508">
    <property type="entry name" value="At2g31720-like"/>
</dbReference>
<dbReference type="InterPro" id="IPR003340">
    <property type="entry name" value="B3_DNA-bd"/>
</dbReference>
<dbReference type="InterPro" id="IPR015300">
    <property type="entry name" value="DNA-bd_pseudobarrel_sf"/>
</dbReference>
<dbReference type="PANTHER" id="PTHR31541">
    <property type="entry name" value="B3 DOMAIN PLANT PROTEIN-RELATED"/>
    <property type="match status" value="1"/>
</dbReference>
<dbReference type="PANTHER" id="PTHR31541:SF30">
    <property type="entry name" value="TF-B3 DOMAIN-CONTAINING PROTEIN"/>
    <property type="match status" value="1"/>
</dbReference>
<dbReference type="Pfam" id="PF03754">
    <property type="entry name" value="At2g31720-like"/>
    <property type="match status" value="1"/>
</dbReference>
<dbReference type="SUPFAM" id="SSF101936">
    <property type="entry name" value="DNA-binding pseudobarrel domain"/>
    <property type="match status" value="1"/>
</dbReference>
<dbReference type="PROSITE" id="PS50863">
    <property type="entry name" value="B3"/>
    <property type="match status" value="1"/>
</dbReference>
<gene>
    <name type="ordered locus">At1g32030</name>
    <name type="ORF">T12O21.7</name>
</gene>
<sequence>MSTYYNDHLAAAEKDISSSNFCNLVDASVMLYDEEHRDLLPKKVNSRCQAKTKKQEKESDKRFFDLFPKKRRTSVVTVRNPEQNQQNLHRVSTSSSLLDLNTIPGDSSDPRNELQGLLSSSSSSFLGDYERKTPQNASSSSTLLAEYNTEMANPPNPNSETSLKRKHSDSEPKKAKTPYSWKGREAPEWLVKMMGTMQGSEGPRLIYEKTLTETDVKPVQSRLLMPFNTLIRNDFLTPVELRILLELEDDTDGVGATLVDPWEVKWGVILKKREMKKYSGKGSLNYAIICGWNDIVEANVLEKDDDISIWSFRRGRNGILSFALVLPPPPDMA</sequence>
<organism>
    <name type="scientific">Arabidopsis thaliana</name>
    <name type="common">Mouse-ear cress</name>
    <dbReference type="NCBI Taxonomy" id="3702"/>
    <lineage>
        <taxon>Eukaryota</taxon>
        <taxon>Viridiplantae</taxon>
        <taxon>Streptophyta</taxon>
        <taxon>Embryophyta</taxon>
        <taxon>Tracheophyta</taxon>
        <taxon>Spermatophyta</taxon>
        <taxon>Magnoliopsida</taxon>
        <taxon>eudicotyledons</taxon>
        <taxon>Gunneridae</taxon>
        <taxon>Pentapetalae</taxon>
        <taxon>rosids</taxon>
        <taxon>malvids</taxon>
        <taxon>Brassicales</taxon>
        <taxon>Brassicaceae</taxon>
        <taxon>Camelineae</taxon>
        <taxon>Arabidopsis</taxon>
    </lineage>
</organism>
<keyword id="KW-0238">DNA-binding</keyword>
<keyword id="KW-0539">Nucleus</keyword>
<keyword id="KW-1185">Reference proteome</keyword>
<keyword id="KW-0804">Transcription</keyword>
<keyword id="KW-0805">Transcription regulation</keyword>
<comment type="subcellular location">
    <subcellularLocation>
        <location evidence="1">Nucleus</location>
    </subcellularLocation>
</comment>
<feature type="chain" id="PRO_0000375123" description="B3 domain-containing protein At1g32030">
    <location>
        <begin position="1"/>
        <end position="333"/>
    </location>
</feature>
<feature type="DNA-binding region" description="TF-B3" evidence="1">
    <location>
        <begin position="220"/>
        <end position="328"/>
    </location>
</feature>
<feature type="region of interest" description="Disordered" evidence="2">
    <location>
        <begin position="76"/>
        <end position="179"/>
    </location>
</feature>
<feature type="compositionally biased region" description="Polar residues" evidence="2">
    <location>
        <begin position="76"/>
        <end position="99"/>
    </location>
</feature>
<feature type="compositionally biased region" description="Polar residues" evidence="2">
    <location>
        <begin position="134"/>
        <end position="143"/>
    </location>
</feature>
<name>Y1203_ARATH</name>
<protein>
    <recommendedName>
        <fullName>B3 domain-containing protein At1g32030</fullName>
    </recommendedName>
</protein>
<accession>Q9C6X0</accession>